<feature type="chain" id="PRO_1000096773" description="Phosphopantetheine adenylyltransferase">
    <location>
        <begin position="1"/>
        <end position="165"/>
    </location>
</feature>
<feature type="binding site" evidence="1">
    <location>
        <begin position="9"/>
        <end position="10"/>
    </location>
    <ligand>
        <name>ATP</name>
        <dbReference type="ChEBI" id="CHEBI:30616"/>
    </ligand>
</feature>
<feature type="binding site" evidence="1">
    <location>
        <position position="9"/>
    </location>
    <ligand>
        <name>substrate</name>
    </ligand>
</feature>
<feature type="binding site" evidence="1">
    <location>
        <position position="17"/>
    </location>
    <ligand>
        <name>ATP</name>
        <dbReference type="ChEBI" id="CHEBI:30616"/>
    </ligand>
</feature>
<feature type="binding site" evidence="1">
    <location>
        <position position="41"/>
    </location>
    <ligand>
        <name>substrate</name>
    </ligand>
</feature>
<feature type="binding site" evidence="1">
    <location>
        <position position="73"/>
    </location>
    <ligand>
        <name>substrate</name>
    </ligand>
</feature>
<feature type="binding site" evidence="1">
    <location>
        <position position="87"/>
    </location>
    <ligand>
        <name>substrate</name>
    </ligand>
</feature>
<feature type="binding site" evidence="1">
    <location>
        <begin position="88"/>
        <end position="90"/>
    </location>
    <ligand>
        <name>ATP</name>
        <dbReference type="ChEBI" id="CHEBI:30616"/>
    </ligand>
</feature>
<feature type="binding site" evidence="1">
    <location>
        <position position="98"/>
    </location>
    <ligand>
        <name>ATP</name>
        <dbReference type="ChEBI" id="CHEBI:30616"/>
    </ligand>
</feature>
<feature type="binding site" evidence="1">
    <location>
        <begin position="123"/>
        <end position="129"/>
    </location>
    <ligand>
        <name>ATP</name>
        <dbReference type="ChEBI" id="CHEBI:30616"/>
    </ligand>
</feature>
<feature type="site" description="Transition state stabilizer" evidence="1">
    <location>
        <position position="17"/>
    </location>
</feature>
<protein>
    <recommendedName>
        <fullName evidence="1">Phosphopantetheine adenylyltransferase</fullName>
        <ecNumber evidence="1">2.7.7.3</ecNumber>
    </recommendedName>
    <alternativeName>
        <fullName evidence="1">Dephospho-CoA pyrophosphorylase</fullName>
    </alternativeName>
    <alternativeName>
        <fullName evidence="1">Pantetheine-phosphate adenylyltransferase</fullName>
        <shortName evidence="1">PPAT</shortName>
    </alternativeName>
</protein>
<gene>
    <name evidence="1" type="primary">coaD</name>
    <name type="ordered locus">Bmul_0494</name>
    <name type="ordered locus">BMULJ_02761</name>
</gene>
<evidence type="ECO:0000255" key="1">
    <source>
        <dbReference type="HAMAP-Rule" id="MF_00151"/>
    </source>
</evidence>
<dbReference type="EC" id="2.7.7.3" evidence="1"/>
<dbReference type="EMBL" id="CP000868">
    <property type="protein sequence ID" value="ABX14189.1"/>
    <property type="molecule type" value="Genomic_DNA"/>
</dbReference>
<dbReference type="EMBL" id="AP009385">
    <property type="protein sequence ID" value="BAG44649.1"/>
    <property type="molecule type" value="Genomic_DNA"/>
</dbReference>
<dbReference type="RefSeq" id="WP_006398238.1">
    <property type="nucleotide sequence ID" value="NC_010804.1"/>
</dbReference>
<dbReference type="SMR" id="A9AEW9"/>
<dbReference type="STRING" id="395019.BMULJ_02761"/>
<dbReference type="GeneID" id="98103885"/>
<dbReference type="KEGG" id="bmj:BMULJ_02761"/>
<dbReference type="KEGG" id="bmu:Bmul_0494"/>
<dbReference type="eggNOG" id="COG0669">
    <property type="taxonomic scope" value="Bacteria"/>
</dbReference>
<dbReference type="HOGENOM" id="CLU_100149_0_1_4"/>
<dbReference type="UniPathway" id="UPA00241">
    <property type="reaction ID" value="UER00355"/>
</dbReference>
<dbReference type="Proteomes" id="UP000008815">
    <property type="component" value="Chromosome 1"/>
</dbReference>
<dbReference type="GO" id="GO:0005737">
    <property type="term" value="C:cytoplasm"/>
    <property type="evidence" value="ECO:0007669"/>
    <property type="project" value="UniProtKB-SubCell"/>
</dbReference>
<dbReference type="GO" id="GO:0005524">
    <property type="term" value="F:ATP binding"/>
    <property type="evidence" value="ECO:0007669"/>
    <property type="project" value="UniProtKB-KW"/>
</dbReference>
<dbReference type="GO" id="GO:0004595">
    <property type="term" value="F:pantetheine-phosphate adenylyltransferase activity"/>
    <property type="evidence" value="ECO:0007669"/>
    <property type="project" value="UniProtKB-UniRule"/>
</dbReference>
<dbReference type="GO" id="GO:0015937">
    <property type="term" value="P:coenzyme A biosynthetic process"/>
    <property type="evidence" value="ECO:0007669"/>
    <property type="project" value="UniProtKB-UniRule"/>
</dbReference>
<dbReference type="CDD" id="cd02163">
    <property type="entry name" value="PPAT"/>
    <property type="match status" value="1"/>
</dbReference>
<dbReference type="Gene3D" id="3.40.50.620">
    <property type="entry name" value="HUPs"/>
    <property type="match status" value="1"/>
</dbReference>
<dbReference type="HAMAP" id="MF_00151">
    <property type="entry name" value="PPAT_bact"/>
    <property type="match status" value="1"/>
</dbReference>
<dbReference type="InterPro" id="IPR004821">
    <property type="entry name" value="Cyt_trans-like"/>
</dbReference>
<dbReference type="InterPro" id="IPR001980">
    <property type="entry name" value="PPAT"/>
</dbReference>
<dbReference type="InterPro" id="IPR014729">
    <property type="entry name" value="Rossmann-like_a/b/a_fold"/>
</dbReference>
<dbReference type="NCBIfam" id="TIGR01510">
    <property type="entry name" value="coaD_prev_kdtB"/>
    <property type="match status" value="1"/>
</dbReference>
<dbReference type="NCBIfam" id="TIGR00125">
    <property type="entry name" value="cyt_tran_rel"/>
    <property type="match status" value="1"/>
</dbReference>
<dbReference type="PANTHER" id="PTHR21342">
    <property type="entry name" value="PHOSPHOPANTETHEINE ADENYLYLTRANSFERASE"/>
    <property type="match status" value="1"/>
</dbReference>
<dbReference type="PANTHER" id="PTHR21342:SF1">
    <property type="entry name" value="PHOSPHOPANTETHEINE ADENYLYLTRANSFERASE"/>
    <property type="match status" value="1"/>
</dbReference>
<dbReference type="Pfam" id="PF01467">
    <property type="entry name" value="CTP_transf_like"/>
    <property type="match status" value="1"/>
</dbReference>
<dbReference type="PRINTS" id="PR01020">
    <property type="entry name" value="LPSBIOSNTHSS"/>
</dbReference>
<dbReference type="SUPFAM" id="SSF52374">
    <property type="entry name" value="Nucleotidylyl transferase"/>
    <property type="match status" value="1"/>
</dbReference>
<reference key="1">
    <citation type="submission" date="2007-10" db="EMBL/GenBank/DDBJ databases">
        <title>Complete sequence of chromosome 1 of Burkholderia multivorans ATCC 17616.</title>
        <authorList>
            <person name="Copeland A."/>
            <person name="Lucas S."/>
            <person name="Lapidus A."/>
            <person name="Barry K."/>
            <person name="Glavina del Rio T."/>
            <person name="Dalin E."/>
            <person name="Tice H."/>
            <person name="Pitluck S."/>
            <person name="Chain P."/>
            <person name="Malfatti S."/>
            <person name="Shin M."/>
            <person name="Vergez L."/>
            <person name="Schmutz J."/>
            <person name="Larimer F."/>
            <person name="Land M."/>
            <person name="Hauser L."/>
            <person name="Kyrpides N."/>
            <person name="Kim E."/>
            <person name="Tiedje J."/>
            <person name="Richardson P."/>
        </authorList>
    </citation>
    <scope>NUCLEOTIDE SEQUENCE [LARGE SCALE GENOMIC DNA]</scope>
    <source>
        <strain>ATCC 17616 / 249</strain>
    </source>
</reference>
<reference key="2">
    <citation type="submission" date="2007-04" db="EMBL/GenBank/DDBJ databases">
        <title>Complete genome sequence of Burkholderia multivorans ATCC 17616.</title>
        <authorList>
            <person name="Ohtsubo Y."/>
            <person name="Yamashita A."/>
            <person name="Kurokawa K."/>
            <person name="Takami H."/>
            <person name="Yuhara S."/>
            <person name="Nishiyama E."/>
            <person name="Endo R."/>
            <person name="Miyazaki R."/>
            <person name="Ono A."/>
            <person name="Yano K."/>
            <person name="Ito M."/>
            <person name="Sota M."/>
            <person name="Yuji N."/>
            <person name="Hattori M."/>
            <person name="Tsuda M."/>
        </authorList>
    </citation>
    <scope>NUCLEOTIDE SEQUENCE [LARGE SCALE GENOMIC DNA]</scope>
    <source>
        <strain>ATCC 17616 / 249</strain>
    </source>
</reference>
<accession>A9AEW9</accession>
<proteinExistence type="inferred from homology"/>
<name>COAD_BURM1</name>
<comment type="function">
    <text evidence="1">Reversibly transfers an adenylyl group from ATP to 4'-phosphopantetheine, yielding dephospho-CoA (dPCoA) and pyrophosphate.</text>
</comment>
<comment type="catalytic activity">
    <reaction evidence="1">
        <text>(R)-4'-phosphopantetheine + ATP + H(+) = 3'-dephospho-CoA + diphosphate</text>
        <dbReference type="Rhea" id="RHEA:19801"/>
        <dbReference type="ChEBI" id="CHEBI:15378"/>
        <dbReference type="ChEBI" id="CHEBI:30616"/>
        <dbReference type="ChEBI" id="CHEBI:33019"/>
        <dbReference type="ChEBI" id="CHEBI:57328"/>
        <dbReference type="ChEBI" id="CHEBI:61723"/>
        <dbReference type="EC" id="2.7.7.3"/>
    </reaction>
</comment>
<comment type="cofactor">
    <cofactor evidence="1">
        <name>Mg(2+)</name>
        <dbReference type="ChEBI" id="CHEBI:18420"/>
    </cofactor>
</comment>
<comment type="pathway">
    <text evidence="1">Cofactor biosynthesis; coenzyme A biosynthesis; CoA from (R)-pantothenate: step 4/5.</text>
</comment>
<comment type="subunit">
    <text evidence="1">Homohexamer.</text>
</comment>
<comment type="subcellular location">
    <subcellularLocation>
        <location evidence="1">Cytoplasm</location>
    </subcellularLocation>
</comment>
<comment type="similarity">
    <text evidence="1">Belongs to the bacterial CoaD family.</text>
</comment>
<organism>
    <name type="scientific">Burkholderia multivorans (strain ATCC 17616 / 249)</name>
    <dbReference type="NCBI Taxonomy" id="395019"/>
    <lineage>
        <taxon>Bacteria</taxon>
        <taxon>Pseudomonadati</taxon>
        <taxon>Pseudomonadota</taxon>
        <taxon>Betaproteobacteria</taxon>
        <taxon>Burkholderiales</taxon>
        <taxon>Burkholderiaceae</taxon>
        <taxon>Burkholderia</taxon>
        <taxon>Burkholderia cepacia complex</taxon>
    </lineage>
</organism>
<keyword id="KW-0067">ATP-binding</keyword>
<keyword id="KW-0173">Coenzyme A biosynthesis</keyword>
<keyword id="KW-0963">Cytoplasm</keyword>
<keyword id="KW-0460">Magnesium</keyword>
<keyword id="KW-0547">Nucleotide-binding</keyword>
<keyword id="KW-0548">Nucleotidyltransferase</keyword>
<keyword id="KW-1185">Reference proteome</keyword>
<keyword id="KW-0808">Transferase</keyword>
<sequence>MVVAVYPGTFDPLTRGHEDLVRRASSIFDTLVVGVADSRAKKPFFSLEERLKIANEVLGHYPNVKVMGFKGLLKDFVRTNNARVIVRGLRAVSDFEYEFQMAGMNRYLLPDVETMFMTPSDQYQFISGTIVREIAQLGGDVSKFVFPSVEKWLTEKVAAMGGPAA</sequence>